<organism>
    <name type="scientific">Nitrosomonas eutropha (strain DSM 101675 / C91 / Nm57)</name>
    <dbReference type="NCBI Taxonomy" id="335283"/>
    <lineage>
        <taxon>Bacteria</taxon>
        <taxon>Pseudomonadati</taxon>
        <taxon>Pseudomonadota</taxon>
        <taxon>Betaproteobacteria</taxon>
        <taxon>Nitrosomonadales</taxon>
        <taxon>Nitrosomonadaceae</taxon>
        <taxon>Nitrosomonas</taxon>
    </lineage>
</organism>
<evidence type="ECO:0000255" key="1">
    <source>
        <dbReference type="HAMAP-Rule" id="MF_01025"/>
    </source>
</evidence>
<name>LEU1_NITEC</name>
<keyword id="KW-0028">Amino-acid biosynthesis</keyword>
<keyword id="KW-0100">Branched-chain amino acid biosynthesis</keyword>
<keyword id="KW-0963">Cytoplasm</keyword>
<keyword id="KW-0432">Leucine biosynthesis</keyword>
<keyword id="KW-0464">Manganese</keyword>
<keyword id="KW-0479">Metal-binding</keyword>
<keyword id="KW-0808">Transferase</keyword>
<protein>
    <recommendedName>
        <fullName evidence="1">2-isopropylmalate synthase</fullName>
        <ecNumber evidence="1">2.3.3.13</ecNumber>
    </recommendedName>
    <alternativeName>
        <fullName evidence="1">Alpha-IPM synthase</fullName>
    </alternativeName>
    <alternativeName>
        <fullName evidence="1">Alpha-isopropylmalate synthase</fullName>
    </alternativeName>
</protein>
<gene>
    <name evidence="1" type="primary">leuA</name>
    <name type="ordered locus">Neut_1244</name>
</gene>
<dbReference type="EC" id="2.3.3.13" evidence="1"/>
<dbReference type="EMBL" id="CP000450">
    <property type="protein sequence ID" value="ABI59497.1"/>
    <property type="molecule type" value="Genomic_DNA"/>
</dbReference>
<dbReference type="RefSeq" id="WP_011634316.1">
    <property type="nucleotide sequence ID" value="NC_008344.1"/>
</dbReference>
<dbReference type="SMR" id="Q0AGN5"/>
<dbReference type="STRING" id="335283.Neut_1244"/>
<dbReference type="KEGG" id="net:Neut_1244"/>
<dbReference type="eggNOG" id="COG0119">
    <property type="taxonomic scope" value="Bacteria"/>
</dbReference>
<dbReference type="HOGENOM" id="CLU_022158_0_1_4"/>
<dbReference type="OrthoDB" id="9803573at2"/>
<dbReference type="UniPathway" id="UPA00048">
    <property type="reaction ID" value="UER00070"/>
</dbReference>
<dbReference type="Proteomes" id="UP000001966">
    <property type="component" value="Chromosome"/>
</dbReference>
<dbReference type="GO" id="GO:0005829">
    <property type="term" value="C:cytosol"/>
    <property type="evidence" value="ECO:0007669"/>
    <property type="project" value="TreeGrafter"/>
</dbReference>
<dbReference type="GO" id="GO:0003852">
    <property type="term" value="F:2-isopropylmalate synthase activity"/>
    <property type="evidence" value="ECO:0007669"/>
    <property type="project" value="UniProtKB-UniRule"/>
</dbReference>
<dbReference type="GO" id="GO:0003985">
    <property type="term" value="F:acetyl-CoA C-acetyltransferase activity"/>
    <property type="evidence" value="ECO:0007669"/>
    <property type="project" value="UniProtKB-UniRule"/>
</dbReference>
<dbReference type="GO" id="GO:0030145">
    <property type="term" value="F:manganese ion binding"/>
    <property type="evidence" value="ECO:0007669"/>
    <property type="project" value="UniProtKB-UniRule"/>
</dbReference>
<dbReference type="GO" id="GO:0009098">
    <property type="term" value="P:L-leucine biosynthetic process"/>
    <property type="evidence" value="ECO:0007669"/>
    <property type="project" value="UniProtKB-UniRule"/>
</dbReference>
<dbReference type="CDD" id="cd07940">
    <property type="entry name" value="DRE_TIM_IPMS"/>
    <property type="match status" value="1"/>
</dbReference>
<dbReference type="FunFam" id="1.10.238.260:FF:000001">
    <property type="entry name" value="2-isopropylmalate synthase"/>
    <property type="match status" value="1"/>
</dbReference>
<dbReference type="FunFam" id="3.20.20.70:FF:000010">
    <property type="entry name" value="2-isopropylmalate synthase"/>
    <property type="match status" value="1"/>
</dbReference>
<dbReference type="FunFam" id="3.30.160.270:FF:000003">
    <property type="entry name" value="2-isopropylmalate synthase"/>
    <property type="match status" value="1"/>
</dbReference>
<dbReference type="Gene3D" id="1.10.238.260">
    <property type="match status" value="1"/>
</dbReference>
<dbReference type="Gene3D" id="3.30.160.270">
    <property type="match status" value="1"/>
</dbReference>
<dbReference type="Gene3D" id="3.20.20.70">
    <property type="entry name" value="Aldolase class I"/>
    <property type="match status" value="1"/>
</dbReference>
<dbReference type="HAMAP" id="MF_01025">
    <property type="entry name" value="LeuA_type1"/>
    <property type="match status" value="1"/>
</dbReference>
<dbReference type="InterPro" id="IPR050073">
    <property type="entry name" value="2-IPM_HCS-like"/>
</dbReference>
<dbReference type="InterPro" id="IPR013709">
    <property type="entry name" value="2-isopropylmalate_synth_dimer"/>
</dbReference>
<dbReference type="InterPro" id="IPR002034">
    <property type="entry name" value="AIPM/Hcit_synth_CS"/>
</dbReference>
<dbReference type="InterPro" id="IPR013785">
    <property type="entry name" value="Aldolase_TIM"/>
</dbReference>
<dbReference type="InterPro" id="IPR054691">
    <property type="entry name" value="LeuA/HCS_post-cat"/>
</dbReference>
<dbReference type="InterPro" id="IPR036230">
    <property type="entry name" value="LeuA_allosteric_dom_sf"/>
</dbReference>
<dbReference type="InterPro" id="IPR005671">
    <property type="entry name" value="LeuA_bact_synth"/>
</dbReference>
<dbReference type="InterPro" id="IPR000891">
    <property type="entry name" value="PYR_CT"/>
</dbReference>
<dbReference type="NCBIfam" id="TIGR00973">
    <property type="entry name" value="leuA_bact"/>
    <property type="match status" value="1"/>
</dbReference>
<dbReference type="NCBIfam" id="NF002086">
    <property type="entry name" value="PRK00915.1-3"/>
    <property type="match status" value="1"/>
</dbReference>
<dbReference type="NCBIfam" id="NF002087">
    <property type="entry name" value="PRK00915.1-4"/>
    <property type="match status" value="1"/>
</dbReference>
<dbReference type="PANTHER" id="PTHR10277:SF9">
    <property type="entry name" value="2-ISOPROPYLMALATE SYNTHASE 1, CHLOROPLASTIC-RELATED"/>
    <property type="match status" value="1"/>
</dbReference>
<dbReference type="PANTHER" id="PTHR10277">
    <property type="entry name" value="HOMOCITRATE SYNTHASE-RELATED"/>
    <property type="match status" value="1"/>
</dbReference>
<dbReference type="Pfam" id="PF22617">
    <property type="entry name" value="HCS_D2"/>
    <property type="match status" value="1"/>
</dbReference>
<dbReference type="Pfam" id="PF00682">
    <property type="entry name" value="HMGL-like"/>
    <property type="match status" value="1"/>
</dbReference>
<dbReference type="Pfam" id="PF08502">
    <property type="entry name" value="LeuA_dimer"/>
    <property type="match status" value="1"/>
</dbReference>
<dbReference type="SMART" id="SM00917">
    <property type="entry name" value="LeuA_dimer"/>
    <property type="match status" value="1"/>
</dbReference>
<dbReference type="SUPFAM" id="SSF110921">
    <property type="entry name" value="2-isopropylmalate synthase LeuA, allosteric (dimerisation) domain"/>
    <property type="match status" value="1"/>
</dbReference>
<dbReference type="SUPFAM" id="SSF51569">
    <property type="entry name" value="Aldolase"/>
    <property type="match status" value="1"/>
</dbReference>
<dbReference type="PROSITE" id="PS00815">
    <property type="entry name" value="AIPM_HOMOCIT_SYNTH_1"/>
    <property type="match status" value="1"/>
</dbReference>
<dbReference type="PROSITE" id="PS00816">
    <property type="entry name" value="AIPM_HOMOCIT_SYNTH_2"/>
    <property type="match status" value="1"/>
</dbReference>
<dbReference type="PROSITE" id="PS50991">
    <property type="entry name" value="PYR_CT"/>
    <property type="match status" value="1"/>
</dbReference>
<accession>Q0AGN5</accession>
<feature type="chain" id="PRO_1000149227" description="2-isopropylmalate synthase">
    <location>
        <begin position="1"/>
        <end position="510"/>
    </location>
</feature>
<feature type="domain" description="Pyruvate carboxyltransferase" evidence="1">
    <location>
        <begin position="5"/>
        <end position="267"/>
    </location>
</feature>
<feature type="region of interest" description="Regulatory domain" evidence="1">
    <location>
        <begin position="392"/>
        <end position="510"/>
    </location>
</feature>
<feature type="binding site" evidence="1">
    <location>
        <position position="14"/>
    </location>
    <ligand>
        <name>Mn(2+)</name>
        <dbReference type="ChEBI" id="CHEBI:29035"/>
    </ligand>
</feature>
<feature type="binding site" evidence="1">
    <location>
        <position position="202"/>
    </location>
    <ligand>
        <name>Mn(2+)</name>
        <dbReference type="ChEBI" id="CHEBI:29035"/>
    </ligand>
</feature>
<feature type="binding site" evidence="1">
    <location>
        <position position="204"/>
    </location>
    <ligand>
        <name>Mn(2+)</name>
        <dbReference type="ChEBI" id="CHEBI:29035"/>
    </ligand>
</feature>
<feature type="binding site" evidence="1">
    <location>
        <position position="238"/>
    </location>
    <ligand>
        <name>Mn(2+)</name>
        <dbReference type="ChEBI" id="CHEBI:29035"/>
    </ligand>
</feature>
<proteinExistence type="inferred from homology"/>
<sequence length="510" mass="55835">MKERLVIFDTTLRDGEQSPGASMTMEEKVRIARQLERMGVDVIEAGFPAASKGDFEAVKAVAEAVSNSTVCGLSRAIEADINRAGEALQANQNMRIHTFIATSPIHMKNKLRMSPDRVIEQAIKAVKWARQYTDNVEFSPEDAGRSEIDFLCRILEAVIDAGARTLNIPDTVGYTMPDQFGGLIRTLRERIPNSDKAVFSVHCHNDLGLAVANSLSAVMNGARQVECTINGLGERAGNAALEEVVMAVRTRQDYFPCDTRIDTTQIVSTSKLVSGITGFPVQPNKAIVGANAFAHESGIHQDGVLKHRETYEIMRAEDVGWGANKLLLGKHSGRNAFRSRLKELGIELESEEKLNTIFIRFKDLADKKHEIFDEDLHALVSDEAQIPEEHYRLLSLVAHSETGEIPFAQVVIATGNNEQQAESEGSGPVDATFRAIEKILNSKAELQLFSVNNITSGTDALGEVTVRLQKVGRIVNGHGADTDIIAASAKAYLNACNKLHSSLERTHPQV</sequence>
<comment type="function">
    <text evidence="1">Catalyzes the condensation of the acetyl group of acetyl-CoA with 3-methyl-2-oxobutanoate (2-ketoisovalerate) to form 3-carboxy-3-hydroxy-4-methylpentanoate (2-isopropylmalate).</text>
</comment>
<comment type="catalytic activity">
    <reaction evidence="1">
        <text>3-methyl-2-oxobutanoate + acetyl-CoA + H2O = (2S)-2-isopropylmalate + CoA + H(+)</text>
        <dbReference type="Rhea" id="RHEA:21524"/>
        <dbReference type="ChEBI" id="CHEBI:1178"/>
        <dbReference type="ChEBI" id="CHEBI:11851"/>
        <dbReference type="ChEBI" id="CHEBI:15377"/>
        <dbReference type="ChEBI" id="CHEBI:15378"/>
        <dbReference type="ChEBI" id="CHEBI:57287"/>
        <dbReference type="ChEBI" id="CHEBI:57288"/>
        <dbReference type="EC" id="2.3.3.13"/>
    </reaction>
</comment>
<comment type="cofactor">
    <cofactor evidence="1">
        <name>Mn(2+)</name>
        <dbReference type="ChEBI" id="CHEBI:29035"/>
    </cofactor>
</comment>
<comment type="pathway">
    <text evidence="1">Amino-acid biosynthesis; L-leucine biosynthesis; L-leucine from 3-methyl-2-oxobutanoate: step 1/4.</text>
</comment>
<comment type="subunit">
    <text evidence="1">Homodimer.</text>
</comment>
<comment type="subcellular location">
    <subcellularLocation>
        <location evidence="1">Cytoplasm</location>
    </subcellularLocation>
</comment>
<comment type="similarity">
    <text evidence="1">Belongs to the alpha-IPM synthase/homocitrate synthase family. LeuA type 1 subfamily.</text>
</comment>
<reference key="1">
    <citation type="journal article" date="2007" name="Environ. Microbiol.">
        <title>Whole-genome analysis of the ammonia-oxidizing bacterium, Nitrosomonas eutropha C91: implications for niche adaptation.</title>
        <authorList>
            <person name="Stein L.Y."/>
            <person name="Arp D.J."/>
            <person name="Berube P.M."/>
            <person name="Chain P.S."/>
            <person name="Hauser L."/>
            <person name="Jetten M.S."/>
            <person name="Klotz M.G."/>
            <person name="Larimer F.W."/>
            <person name="Norton J.M."/>
            <person name="Op den Camp H.J.M."/>
            <person name="Shin M."/>
            <person name="Wei X."/>
        </authorList>
    </citation>
    <scope>NUCLEOTIDE SEQUENCE [LARGE SCALE GENOMIC DNA]</scope>
    <source>
        <strain>DSM 101675 / C91 / Nm57</strain>
    </source>
</reference>